<organism>
    <name type="scientific">Clostridium perfringens (strain SM101 / Type A)</name>
    <dbReference type="NCBI Taxonomy" id="289380"/>
    <lineage>
        <taxon>Bacteria</taxon>
        <taxon>Bacillati</taxon>
        <taxon>Bacillota</taxon>
        <taxon>Clostridia</taxon>
        <taxon>Eubacteriales</taxon>
        <taxon>Clostridiaceae</taxon>
        <taxon>Clostridium</taxon>
    </lineage>
</organism>
<accession>Q0STN6</accession>
<protein>
    <recommendedName>
        <fullName evidence="1">Orotidine 5'-phosphate decarboxylase</fullName>
        <ecNumber evidence="1">4.1.1.23</ecNumber>
    </recommendedName>
    <alternativeName>
        <fullName evidence="1">OMP decarboxylase</fullName>
        <shortName evidence="1">OMPDCase</shortName>
        <shortName evidence="1">OMPdecase</shortName>
    </alternativeName>
</protein>
<sequence>MIADKLFEKVEKNGVVCVGLDTSLDYIPEEFKSKFSNESDMLFAFNKEIIDATLDVSACFKVQIAYYEALGLKGLEAYKNTLSYLREKNALIIADIKRGDIAATAKMYAKAHFEGDFESDFITLNPYMGMDSIDPYLPYIEKNEKGVFVLVRTSNKGAQDIEYLEAGDGKKVYDVVGEKLNTLGKNYLGKHGYSSIGGVVGCTHQEEAKEMRDKLDTMPFLIPGYGAQGGTAKDVASYLKNGNGGIVNSSRKILLAYKAMEDNKNFAECARKEAISMRDSIREAILK</sequence>
<name>PYRF_CLOPS</name>
<comment type="catalytic activity">
    <reaction evidence="1">
        <text>orotidine 5'-phosphate + H(+) = UMP + CO2</text>
        <dbReference type="Rhea" id="RHEA:11596"/>
        <dbReference type="ChEBI" id="CHEBI:15378"/>
        <dbReference type="ChEBI" id="CHEBI:16526"/>
        <dbReference type="ChEBI" id="CHEBI:57538"/>
        <dbReference type="ChEBI" id="CHEBI:57865"/>
        <dbReference type="EC" id="4.1.1.23"/>
    </reaction>
</comment>
<comment type="pathway">
    <text evidence="1">Pyrimidine metabolism; UMP biosynthesis via de novo pathway; UMP from orotate: step 2/2.</text>
</comment>
<comment type="similarity">
    <text evidence="1">Belongs to the OMP decarboxylase family. Type 2 subfamily.</text>
</comment>
<dbReference type="EC" id="4.1.1.23" evidence="1"/>
<dbReference type="EMBL" id="CP000312">
    <property type="protein sequence ID" value="ABG86353.1"/>
    <property type="molecule type" value="Genomic_DNA"/>
</dbReference>
<dbReference type="RefSeq" id="WP_011592196.1">
    <property type="nucleotide sequence ID" value="NC_008262.1"/>
</dbReference>
<dbReference type="SMR" id="Q0STN6"/>
<dbReference type="KEGG" id="cpr:CPR_1199"/>
<dbReference type="UniPathway" id="UPA00070">
    <property type="reaction ID" value="UER00120"/>
</dbReference>
<dbReference type="Proteomes" id="UP000001824">
    <property type="component" value="Chromosome"/>
</dbReference>
<dbReference type="GO" id="GO:0004590">
    <property type="term" value="F:orotidine-5'-phosphate decarboxylase activity"/>
    <property type="evidence" value="ECO:0007669"/>
    <property type="project" value="UniProtKB-UniRule"/>
</dbReference>
<dbReference type="GO" id="GO:0006207">
    <property type="term" value="P:'de novo' pyrimidine nucleobase biosynthetic process"/>
    <property type="evidence" value="ECO:0007669"/>
    <property type="project" value="InterPro"/>
</dbReference>
<dbReference type="GO" id="GO:0044205">
    <property type="term" value="P:'de novo' UMP biosynthetic process"/>
    <property type="evidence" value="ECO:0007669"/>
    <property type="project" value="UniProtKB-UniRule"/>
</dbReference>
<dbReference type="CDD" id="cd04725">
    <property type="entry name" value="OMP_decarboxylase_like"/>
    <property type="match status" value="1"/>
</dbReference>
<dbReference type="FunFam" id="3.20.20.70:FF:000246">
    <property type="entry name" value="Orotidine 5'-phosphate decarboxylase"/>
    <property type="match status" value="1"/>
</dbReference>
<dbReference type="Gene3D" id="3.20.20.70">
    <property type="entry name" value="Aldolase class I"/>
    <property type="match status" value="1"/>
</dbReference>
<dbReference type="HAMAP" id="MF_01215">
    <property type="entry name" value="OMPdecase_type2"/>
    <property type="match status" value="1"/>
</dbReference>
<dbReference type="InterPro" id="IPR013785">
    <property type="entry name" value="Aldolase_TIM"/>
</dbReference>
<dbReference type="InterPro" id="IPR018089">
    <property type="entry name" value="OMPdecase_AS"/>
</dbReference>
<dbReference type="InterPro" id="IPR011995">
    <property type="entry name" value="OMPdecase_type-2"/>
</dbReference>
<dbReference type="InterPro" id="IPR001754">
    <property type="entry name" value="OMPdeCOase_dom"/>
</dbReference>
<dbReference type="InterPro" id="IPR011060">
    <property type="entry name" value="RibuloseP-bd_barrel"/>
</dbReference>
<dbReference type="NCBIfam" id="TIGR02127">
    <property type="entry name" value="pyrF_sub2"/>
    <property type="match status" value="1"/>
</dbReference>
<dbReference type="PANTHER" id="PTHR43375">
    <property type="entry name" value="OROTIDINE 5'-PHOSPHATE DECARBOXYLASE"/>
    <property type="match status" value="1"/>
</dbReference>
<dbReference type="PANTHER" id="PTHR43375:SF1">
    <property type="entry name" value="OROTIDINE 5'-PHOSPHATE DECARBOXYLASE"/>
    <property type="match status" value="1"/>
</dbReference>
<dbReference type="Pfam" id="PF00215">
    <property type="entry name" value="OMPdecase"/>
    <property type="match status" value="1"/>
</dbReference>
<dbReference type="SMART" id="SM00934">
    <property type="entry name" value="OMPdecase"/>
    <property type="match status" value="1"/>
</dbReference>
<dbReference type="SUPFAM" id="SSF51366">
    <property type="entry name" value="Ribulose-phoshate binding barrel"/>
    <property type="match status" value="1"/>
</dbReference>
<dbReference type="PROSITE" id="PS00156">
    <property type="entry name" value="OMPDECASE"/>
    <property type="match status" value="1"/>
</dbReference>
<feature type="chain" id="PRO_1000066466" description="Orotidine 5'-phosphate decarboxylase">
    <location>
        <begin position="1"/>
        <end position="287"/>
    </location>
</feature>
<feature type="active site" description="Proton donor" evidence="1">
    <location>
        <position position="97"/>
    </location>
</feature>
<reference key="1">
    <citation type="journal article" date="2006" name="Genome Res.">
        <title>Skewed genomic variability in strains of the toxigenic bacterial pathogen, Clostridium perfringens.</title>
        <authorList>
            <person name="Myers G.S.A."/>
            <person name="Rasko D.A."/>
            <person name="Cheung J.K."/>
            <person name="Ravel J."/>
            <person name="Seshadri R."/>
            <person name="DeBoy R.T."/>
            <person name="Ren Q."/>
            <person name="Varga J."/>
            <person name="Awad M.M."/>
            <person name="Brinkac L.M."/>
            <person name="Daugherty S.C."/>
            <person name="Haft D.H."/>
            <person name="Dodson R.J."/>
            <person name="Madupu R."/>
            <person name="Nelson W.C."/>
            <person name="Rosovitz M.J."/>
            <person name="Sullivan S.A."/>
            <person name="Khouri H."/>
            <person name="Dimitrov G.I."/>
            <person name="Watkins K.L."/>
            <person name="Mulligan S."/>
            <person name="Benton J."/>
            <person name="Radune D."/>
            <person name="Fisher D.J."/>
            <person name="Atkins H.S."/>
            <person name="Hiscox T."/>
            <person name="Jost B.H."/>
            <person name="Billington S.J."/>
            <person name="Songer J.G."/>
            <person name="McClane B.A."/>
            <person name="Titball R.W."/>
            <person name="Rood J.I."/>
            <person name="Melville S.B."/>
            <person name="Paulsen I.T."/>
        </authorList>
    </citation>
    <scope>NUCLEOTIDE SEQUENCE [LARGE SCALE GENOMIC DNA]</scope>
    <source>
        <strain>SM101 / Type A</strain>
    </source>
</reference>
<proteinExistence type="inferred from homology"/>
<evidence type="ECO:0000255" key="1">
    <source>
        <dbReference type="HAMAP-Rule" id="MF_01215"/>
    </source>
</evidence>
<gene>
    <name evidence="1" type="primary">pyrF</name>
    <name type="ordered locus">CPR_1199</name>
</gene>
<keyword id="KW-0210">Decarboxylase</keyword>
<keyword id="KW-0456">Lyase</keyword>
<keyword id="KW-0665">Pyrimidine biosynthesis</keyword>